<evidence type="ECO:0000255" key="1">
    <source>
        <dbReference type="HAMAP-Rule" id="MF_01325"/>
    </source>
</evidence>
<evidence type="ECO:0000256" key="2">
    <source>
        <dbReference type="SAM" id="MobiDB-lite"/>
    </source>
</evidence>
<evidence type="ECO:0000305" key="3"/>
<reference key="1">
    <citation type="submission" date="2005-07" db="EMBL/GenBank/DDBJ databases">
        <title>Complete sequence of Synechococcus sp. CC9605.</title>
        <authorList>
            <consortium name="US DOE Joint Genome Institute"/>
            <person name="Copeland A."/>
            <person name="Lucas S."/>
            <person name="Lapidus A."/>
            <person name="Barry K."/>
            <person name="Detter J.C."/>
            <person name="Glavina T."/>
            <person name="Hammon N."/>
            <person name="Israni S."/>
            <person name="Pitluck S."/>
            <person name="Schmutz J."/>
            <person name="Martinez M."/>
            <person name="Larimer F."/>
            <person name="Land M."/>
            <person name="Kyrpides N."/>
            <person name="Ivanova N."/>
            <person name="Richardson P."/>
        </authorList>
    </citation>
    <scope>NUCLEOTIDE SEQUENCE [LARGE SCALE GENOMIC DNA]</scope>
    <source>
        <strain>CC9605</strain>
    </source>
</reference>
<accession>Q3AMN0</accession>
<organism>
    <name type="scientific">Synechococcus sp. (strain CC9605)</name>
    <dbReference type="NCBI Taxonomy" id="110662"/>
    <lineage>
        <taxon>Bacteria</taxon>
        <taxon>Bacillati</taxon>
        <taxon>Cyanobacteriota</taxon>
        <taxon>Cyanophyceae</taxon>
        <taxon>Synechococcales</taxon>
        <taxon>Synechococcaceae</taxon>
        <taxon>Synechococcus</taxon>
    </lineage>
</organism>
<dbReference type="EMBL" id="CP000110">
    <property type="protein sequence ID" value="ABB34152.1"/>
    <property type="molecule type" value="Genomic_DNA"/>
</dbReference>
<dbReference type="RefSeq" id="WP_011363389.1">
    <property type="nucleotide sequence ID" value="NC_007516.1"/>
</dbReference>
<dbReference type="SMR" id="Q3AMN0"/>
<dbReference type="STRING" id="110662.Syncc9605_0376"/>
<dbReference type="KEGG" id="syd:Syncc9605_0376"/>
<dbReference type="eggNOG" id="COG0087">
    <property type="taxonomic scope" value="Bacteria"/>
</dbReference>
<dbReference type="HOGENOM" id="CLU_044142_4_1_3"/>
<dbReference type="OrthoDB" id="9806135at2"/>
<dbReference type="GO" id="GO:0022625">
    <property type="term" value="C:cytosolic large ribosomal subunit"/>
    <property type="evidence" value="ECO:0007669"/>
    <property type="project" value="TreeGrafter"/>
</dbReference>
<dbReference type="GO" id="GO:0019843">
    <property type="term" value="F:rRNA binding"/>
    <property type="evidence" value="ECO:0007669"/>
    <property type="project" value="UniProtKB-UniRule"/>
</dbReference>
<dbReference type="GO" id="GO:0003735">
    <property type="term" value="F:structural constituent of ribosome"/>
    <property type="evidence" value="ECO:0007669"/>
    <property type="project" value="InterPro"/>
</dbReference>
<dbReference type="GO" id="GO:0006412">
    <property type="term" value="P:translation"/>
    <property type="evidence" value="ECO:0007669"/>
    <property type="project" value="UniProtKB-UniRule"/>
</dbReference>
<dbReference type="FunFam" id="3.30.160.810:FF:000001">
    <property type="entry name" value="50S ribosomal protein L3"/>
    <property type="match status" value="1"/>
</dbReference>
<dbReference type="FunFam" id="2.40.30.10:FF:000065">
    <property type="entry name" value="50S ribosomal protein L3, chloroplastic"/>
    <property type="match status" value="1"/>
</dbReference>
<dbReference type="Gene3D" id="3.30.160.810">
    <property type="match status" value="1"/>
</dbReference>
<dbReference type="Gene3D" id="2.40.30.10">
    <property type="entry name" value="Translation factors"/>
    <property type="match status" value="1"/>
</dbReference>
<dbReference type="HAMAP" id="MF_01325_B">
    <property type="entry name" value="Ribosomal_uL3_B"/>
    <property type="match status" value="1"/>
</dbReference>
<dbReference type="InterPro" id="IPR000597">
    <property type="entry name" value="Ribosomal_uL3"/>
</dbReference>
<dbReference type="InterPro" id="IPR019927">
    <property type="entry name" value="Ribosomal_uL3_bac/org-type"/>
</dbReference>
<dbReference type="InterPro" id="IPR019926">
    <property type="entry name" value="Ribosomal_uL3_CS"/>
</dbReference>
<dbReference type="InterPro" id="IPR009000">
    <property type="entry name" value="Transl_B-barrel_sf"/>
</dbReference>
<dbReference type="NCBIfam" id="TIGR03625">
    <property type="entry name" value="L3_bact"/>
    <property type="match status" value="1"/>
</dbReference>
<dbReference type="PANTHER" id="PTHR11229">
    <property type="entry name" value="50S RIBOSOMAL PROTEIN L3"/>
    <property type="match status" value="1"/>
</dbReference>
<dbReference type="PANTHER" id="PTHR11229:SF16">
    <property type="entry name" value="LARGE RIBOSOMAL SUBUNIT PROTEIN UL3C"/>
    <property type="match status" value="1"/>
</dbReference>
<dbReference type="Pfam" id="PF00297">
    <property type="entry name" value="Ribosomal_L3"/>
    <property type="match status" value="1"/>
</dbReference>
<dbReference type="SUPFAM" id="SSF50447">
    <property type="entry name" value="Translation proteins"/>
    <property type="match status" value="1"/>
</dbReference>
<dbReference type="PROSITE" id="PS00474">
    <property type="entry name" value="RIBOSOMAL_L3"/>
    <property type="match status" value="1"/>
</dbReference>
<name>RL3_SYNSC</name>
<sequence>MSIGILGKKLGMSQFFDEQGRAVPVTLIEAGPCRITQLKNDDTDGYSAVQIGFGETREKLINKPAQGHLNKSGEGLLRHLREYRVDSVEGLELGGAITVGDFEAGQKVDVSGDTVGRGFAGYQKRHGFSRGPMTHGSKNHREPGSTGAGTTPGRIYPGKRMAGRYGGKKITTRGLTILKVDSEHNLLVVKGSVPGKPGALLNIRPALRVGAKPANGGK</sequence>
<protein>
    <recommendedName>
        <fullName evidence="1">Large ribosomal subunit protein uL3</fullName>
    </recommendedName>
    <alternativeName>
        <fullName evidence="3">50S ribosomal protein L3</fullName>
    </alternativeName>
</protein>
<gene>
    <name evidence="1" type="primary">rplC</name>
    <name evidence="1" type="synonym">rpl3</name>
    <name type="ordered locus">Syncc9605_0376</name>
</gene>
<comment type="function">
    <text evidence="1">One of the primary rRNA binding proteins, it binds directly near the 3'-end of the 23S rRNA, where it nucleates assembly of the 50S subunit.</text>
</comment>
<comment type="subunit">
    <text evidence="1">Part of the 50S ribosomal subunit. Forms a cluster with proteins L14 and L19.</text>
</comment>
<comment type="similarity">
    <text evidence="1">Belongs to the universal ribosomal protein uL3 family.</text>
</comment>
<proteinExistence type="inferred from homology"/>
<feature type="chain" id="PRO_0000241421" description="Large ribosomal subunit protein uL3">
    <location>
        <begin position="1"/>
        <end position="218"/>
    </location>
</feature>
<feature type="region of interest" description="Disordered" evidence="2">
    <location>
        <begin position="124"/>
        <end position="162"/>
    </location>
</feature>
<keyword id="KW-0687">Ribonucleoprotein</keyword>
<keyword id="KW-0689">Ribosomal protein</keyword>
<keyword id="KW-0694">RNA-binding</keyword>
<keyword id="KW-0699">rRNA-binding</keyword>